<comment type="function">
    <text evidence="1">NAD-binding protein involved in the addition of a carboxymethylaminomethyl (cmnm) group at the wobble position (U34) of certain tRNAs, forming tRNA-cmnm(5)s(2)U34.</text>
</comment>
<comment type="cofactor">
    <cofactor evidence="1">
        <name>FAD</name>
        <dbReference type="ChEBI" id="CHEBI:57692"/>
    </cofactor>
</comment>
<comment type="subunit">
    <text evidence="1">Homodimer. Heterotetramer of two MnmE and two MnmG subunits.</text>
</comment>
<comment type="subcellular location">
    <subcellularLocation>
        <location evidence="1">Cytoplasm</location>
    </subcellularLocation>
</comment>
<comment type="similarity">
    <text evidence="1">Belongs to the MnmG family.</text>
</comment>
<evidence type="ECO:0000255" key="1">
    <source>
        <dbReference type="HAMAP-Rule" id="MF_00129"/>
    </source>
</evidence>
<dbReference type="EMBL" id="BA000003">
    <property type="protein sequence ID" value="BAB12729.1"/>
    <property type="molecule type" value="Genomic_DNA"/>
</dbReference>
<dbReference type="RefSeq" id="NP_239843.1">
    <property type="nucleotide sequence ID" value="NC_002528.1"/>
</dbReference>
<dbReference type="RefSeq" id="WP_010895896.1">
    <property type="nucleotide sequence ID" value="NC_002528.1"/>
</dbReference>
<dbReference type="SMR" id="P57117"/>
<dbReference type="STRING" id="563178.BUAP5A_001"/>
<dbReference type="EnsemblBacteria" id="BAB12729">
    <property type="protein sequence ID" value="BAB12729"/>
    <property type="gene ID" value="BAB12729"/>
</dbReference>
<dbReference type="KEGG" id="buc:BU001"/>
<dbReference type="PATRIC" id="fig|107806.10.peg.14"/>
<dbReference type="eggNOG" id="COG0445">
    <property type="taxonomic scope" value="Bacteria"/>
</dbReference>
<dbReference type="HOGENOM" id="CLU_007831_2_2_6"/>
<dbReference type="Proteomes" id="UP000001806">
    <property type="component" value="Chromosome"/>
</dbReference>
<dbReference type="GO" id="GO:0005829">
    <property type="term" value="C:cytosol"/>
    <property type="evidence" value="ECO:0007669"/>
    <property type="project" value="TreeGrafter"/>
</dbReference>
<dbReference type="GO" id="GO:0050660">
    <property type="term" value="F:flavin adenine dinucleotide binding"/>
    <property type="evidence" value="ECO:0007669"/>
    <property type="project" value="UniProtKB-UniRule"/>
</dbReference>
<dbReference type="GO" id="GO:0030488">
    <property type="term" value="P:tRNA methylation"/>
    <property type="evidence" value="ECO:0007669"/>
    <property type="project" value="TreeGrafter"/>
</dbReference>
<dbReference type="GO" id="GO:0002098">
    <property type="term" value="P:tRNA wobble uridine modification"/>
    <property type="evidence" value="ECO:0007669"/>
    <property type="project" value="InterPro"/>
</dbReference>
<dbReference type="FunFam" id="1.10.10.1800:FF:000001">
    <property type="entry name" value="tRNA uridine 5-carboxymethylaminomethyl modification enzyme MnmG"/>
    <property type="match status" value="1"/>
</dbReference>
<dbReference type="FunFam" id="1.10.150.570:FF:000001">
    <property type="entry name" value="tRNA uridine 5-carboxymethylaminomethyl modification enzyme MnmG"/>
    <property type="match status" value="1"/>
</dbReference>
<dbReference type="FunFam" id="3.50.50.60:FF:000002">
    <property type="entry name" value="tRNA uridine 5-carboxymethylaminomethyl modification enzyme MnmG"/>
    <property type="match status" value="1"/>
</dbReference>
<dbReference type="FunFam" id="3.50.50.60:FF:000010">
    <property type="entry name" value="tRNA uridine 5-carboxymethylaminomethyl modification enzyme MnmG"/>
    <property type="match status" value="1"/>
</dbReference>
<dbReference type="Gene3D" id="3.50.50.60">
    <property type="entry name" value="FAD/NAD(P)-binding domain"/>
    <property type="match status" value="2"/>
</dbReference>
<dbReference type="Gene3D" id="1.10.150.570">
    <property type="entry name" value="GidA associated domain, C-terminal subdomain"/>
    <property type="match status" value="1"/>
</dbReference>
<dbReference type="Gene3D" id="1.10.10.1800">
    <property type="entry name" value="tRNA uridine 5-carboxymethylaminomethyl modification enzyme MnmG/GidA"/>
    <property type="match status" value="1"/>
</dbReference>
<dbReference type="HAMAP" id="MF_00129">
    <property type="entry name" value="MnmG_GidA"/>
    <property type="match status" value="1"/>
</dbReference>
<dbReference type="InterPro" id="IPR036188">
    <property type="entry name" value="FAD/NAD-bd_sf"/>
</dbReference>
<dbReference type="InterPro" id="IPR049312">
    <property type="entry name" value="GIDA_C_N"/>
</dbReference>
<dbReference type="InterPro" id="IPR004416">
    <property type="entry name" value="MnmG"/>
</dbReference>
<dbReference type="InterPro" id="IPR002218">
    <property type="entry name" value="MnmG-rel"/>
</dbReference>
<dbReference type="InterPro" id="IPR020595">
    <property type="entry name" value="MnmG-rel_CS"/>
</dbReference>
<dbReference type="InterPro" id="IPR026904">
    <property type="entry name" value="MnmG_C"/>
</dbReference>
<dbReference type="InterPro" id="IPR047001">
    <property type="entry name" value="MnmG_C_subdom"/>
</dbReference>
<dbReference type="InterPro" id="IPR044920">
    <property type="entry name" value="MnmG_C_subdom_sf"/>
</dbReference>
<dbReference type="InterPro" id="IPR040131">
    <property type="entry name" value="MnmG_N"/>
</dbReference>
<dbReference type="NCBIfam" id="TIGR00136">
    <property type="entry name" value="mnmG_gidA"/>
    <property type="match status" value="1"/>
</dbReference>
<dbReference type="PANTHER" id="PTHR11806">
    <property type="entry name" value="GLUCOSE INHIBITED DIVISION PROTEIN A"/>
    <property type="match status" value="1"/>
</dbReference>
<dbReference type="PANTHER" id="PTHR11806:SF0">
    <property type="entry name" value="PROTEIN MTO1 HOMOLOG, MITOCHONDRIAL"/>
    <property type="match status" value="1"/>
</dbReference>
<dbReference type="Pfam" id="PF01134">
    <property type="entry name" value="GIDA"/>
    <property type="match status" value="1"/>
</dbReference>
<dbReference type="Pfam" id="PF21680">
    <property type="entry name" value="GIDA_C_1st"/>
    <property type="match status" value="1"/>
</dbReference>
<dbReference type="Pfam" id="PF13932">
    <property type="entry name" value="SAM_GIDA_C"/>
    <property type="match status" value="1"/>
</dbReference>
<dbReference type="SMART" id="SM01228">
    <property type="entry name" value="GIDA_assoc_3"/>
    <property type="match status" value="1"/>
</dbReference>
<dbReference type="SUPFAM" id="SSF51905">
    <property type="entry name" value="FAD/NAD(P)-binding domain"/>
    <property type="match status" value="1"/>
</dbReference>
<dbReference type="PROSITE" id="PS01280">
    <property type="entry name" value="GIDA_1"/>
    <property type="match status" value="1"/>
</dbReference>
<dbReference type="PROSITE" id="PS01281">
    <property type="entry name" value="GIDA_2"/>
    <property type="match status" value="1"/>
</dbReference>
<feature type="chain" id="PRO_0000117072" description="tRNA uridine 5-carboxymethylaminomethyl modification enzyme MnmG">
    <location>
        <begin position="1"/>
        <end position="628"/>
    </location>
</feature>
<feature type="binding site" evidence="1">
    <location>
        <begin position="13"/>
        <end position="18"/>
    </location>
    <ligand>
        <name>FAD</name>
        <dbReference type="ChEBI" id="CHEBI:57692"/>
    </ligand>
</feature>
<feature type="binding site" evidence="1">
    <location>
        <begin position="273"/>
        <end position="287"/>
    </location>
    <ligand>
        <name>NAD(+)</name>
        <dbReference type="ChEBI" id="CHEBI:57540"/>
    </ligand>
</feature>
<keyword id="KW-0963">Cytoplasm</keyword>
<keyword id="KW-0274">FAD</keyword>
<keyword id="KW-0285">Flavoprotein</keyword>
<keyword id="KW-0520">NAD</keyword>
<keyword id="KW-1185">Reference proteome</keyword>
<keyword id="KW-0819">tRNA processing</keyword>
<proteinExistence type="inferred from homology"/>
<gene>
    <name evidence="1" type="primary">mnmG</name>
    <name evidence="1" type="synonym">gidA</name>
    <name type="ordered locus">BU001</name>
</gene>
<organism>
    <name type="scientific">Buchnera aphidicola subsp. Acyrthosiphon pisum (strain APS)</name>
    <name type="common">Acyrthosiphon pisum symbiotic bacterium</name>
    <dbReference type="NCBI Taxonomy" id="107806"/>
    <lineage>
        <taxon>Bacteria</taxon>
        <taxon>Pseudomonadati</taxon>
        <taxon>Pseudomonadota</taxon>
        <taxon>Gammaproteobacteria</taxon>
        <taxon>Enterobacterales</taxon>
        <taxon>Erwiniaceae</taxon>
        <taxon>Buchnera</taxon>
    </lineage>
</organism>
<protein>
    <recommendedName>
        <fullName evidence="1">tRNA uridine 5-carboxymethylaminomethyl modification enzyme MnmG</fullName>
    </recommendedName>
    <alternativeName>
        <fullName evidence="1">Glucose-inhibited division protein A</fullName>
    </alternativeName>
</protein>
<sequence length="628" mass="70307">MFNLRNFDVIVVGAGHAGTEAAMASSRMGCKTLLLTQKISDLGALSCNPAIGGIGKSHLVKEIDALGGMMAKAIDYSGIQFRILNSSKGPAVRSTRAQADKILYHETVKKILKKQNNLLILEAEVKDLIFKNYSVVGVLTQNEINFYSRSVVLAAGTFLGGKIHIGLKSYSAGRIGDKSAIDLSVRLRELSLRVNRLKTGTPPRIDINTVNFNNLLIQNSDTPVPVFSFMGNVSHHPKQIPCYLTHTNEKTHEIIRKNLDKSPIYTGFLKGLGPRYCPSIEDKIVRFPDRKSHQVFLEPEGLSSIKVYPNGISTSLPIEVQEQIVASIKGLEKSKIIRPGYAIEYDFFDPKDLNLTLESKLIKGLFFAGQINGTTGYEEAASQGLLAGLNAALSSKNTEGWFPRRDQAYLGVLIDDLTTQGTEEPYRMFTSRAEYRLSLREDNADLRLTEIGRKLGLVNDSRWIRYNQKVLNIQTEMNRLKKNKISPISPDADILKKLYNINLIKEISMSELLKRPQIRYQDLQSLESFRTGIVDLEAIGQIENEIKYAGYIKRQSEEIERHLKNENTFLSSIYDYNKIRGLSSEVVKKLNDYKPISIGQASRISGITPAAISILLIHLKKESYKHTL</sequence>
<reference key="1">
    <citation type="journal article" date="2000" name="Nature">
        <title>Genome sequence of the endocellular bacterial symbiont of aphids Buchnera sp. APS.</title>
        <authorList>
            <person name="Shigenobu S."/>
            <person name="Watanabe H."/>
            <person name="Hattori M."/>
            <person name="Sakaki Y."/>
            <person name="Ishikawa H."/>
        </authorList>
    </citation>
    <scope>NUCLEOTIDE SEQUENCE [LARGE SCALE GENOMIC DNA]</scope>
    <source>
        <strain>APS</strain>
    </source>
</reference>
<name>MNMG_BUCAI</name>
<accession>P57117</accession>